<accession>Q8DRZ4</accession>
<sequence length="341" mass="36356">MSLKFQKLSGLVLCFLIALPAWFLGQSFPLVGAPVFAIFLGMLLAIFYKNREHTEAGIAFTSKYILQFAVVLLGFGLNLSQVLTVGKTSLPIIVATISSSLLLAFLLQKWFKLDVNTATLVGVGSSICGGSAIAATAPVIQADGDEIAQSISVIFLFNILAALIFPTLGDMIGLSNHGFALFAGTAVNDTSSVTATAAAWDGLHHSNTLDGATIVKLTRTLAIIPITLGLSFYQVYKTKKVGKNQQHTVKLKKVFPMFILYFILASIITTILTALGVNPIFFTPLKTLSKFCIVMAMGAIGLNTNIVKLVKTGGQAIVLGASCWIVITLVSLGMQHLLGIW</sequence>
<gene>
    <name type="ordered locus">SMU_2059c</name>
</gene>
<reference key="1">
    <citation type="journal article" date="2002" name="Proc. Natl. Acad. Sci. U.S.A.">
        <title>Genome sequence of Streptococcus mutans UA159, a cariogenic dental pathogen.</title>
        <authorList>
            <person name="Ajdic D.J."/>
            <person name="McShan W.M."/>
            <person name="McLaughlin R.E."/>
            <person name="Savic G."/>
            <person name="Chang J."/>
            <person name="Carson M.B."/>
            <person name="Primeaux C."/>
            <person name="Tian R."/>
            <person name="Kenton S."/>
            <person name="Jia H.G."/>
            <person name="Lin S.P."/>
            <person name="Qian Y."/>
            <person name="Li S."/>
            <person name="Zhu H."/>
            <person name="Najar F.Z."/>
            <person name="Lai H."/>
            <person name="White J."/>
            <person name="Roe B.A."/>
            <person name="Ferretti J.J."/>
        </authorList>
    </citation>
    <scope>NUCLEOTIDE SEQUENCE [LARGE SCALE GENOMIC DNA]</scope>
    <source>
        <strain>ATCC 700610 / UA159</strain>
    </source>
</reference>
<feature type="chain" id="PRO_0000157461" description="UPF0324 membrane protein SMU_2059c">
    <location>
        <begin position="1"/>
        <end position="341"/>
    </location>
</feature>
<feature type="transmembrane region" description="Helical" evidence="1">
    <location>
        <begin position="7"/>
        <end position="24"/>
    </location>
</feature>
<feature type="transmembrane region" description="Helical" evidence="1">
    <location>
        <begin position="28"/>
        <end position="47"/>
    </location>
</feature>
<feature type="transmembrane region" description="Helical" evidence="1">
    <location>
        <begin position="68"/>
        <end position="85"/>
    </location>
</feature>
<feature type="transmembrane region" description="Helical" evidence="1">
    <location>
        <begin position="90"/>
        <end position="107"/>
    </location>
</feature>
<feature type="transmembrane region" description="Helical" evidence="1">
    <location>
        <begin position="120"/>
        <end position="142"/>
    </location>
</feature>
<feature type="transmembrane region" description="Helical" evidence="1">
    <location>
        <begin position="147"/>
        <end position="169"/>
    </location>
</feature>
<feature type="transmembrane region" description="Helical" evidence="1">
    <location>
        <begin position="178"/>
        <end position="200"/>
    </location>
</feature>
<feature type="transmembrane region" description="Helical" evidence="1">
    <location>
        <begin position="211"/>
        <end position="233"/>
    </location>
</feature>
<feature type="transmembrane region" description="Helical" evidence="1">
    <location>
        <begin position="254"/>
        <end position="276"/>
    </location>
</feature>
<feature type="transmembrane region" description="Helical" evidence="1">
    <location>
        <begin position="291"/>
        <end position="310"/>
    </location>
</feature>
<feature type="transmembrane region" description="Helical" evidence="1">
    <location>
        <begin position="317"/>
        <end position="339"/>
    </location>
</feature>
<protein>
    <recommendedName>
        <fullName>UPF0324 membrane protein SMU_2059c</fullName>
    </recommendedName>
</protein>
<name>Y2059_STRMU</name>
<proteinExistence type="inferred from homology"/>
<evidence type="ECO:0000255" key="1"/>
<evidence type="ECO:0000305" key="2"/>
<comment type="subcellular location">
    <subcellularLocation>
        <location evidence="2">Cell membrane</location>
        <topology evidence="2">Multi-pass membrane protein</topology>
    </subcellularLocation>
</comment>
<comment type="similarity">
    <text evidence="2">Belongs to the UPF0324 family.</text>
</comment>
<keyword id="KW-1003">Cell membrane</keyword>
<keyword id="KW-0472">Membrane</keyword>
<keyword id="KW-1185">Reference proteome</keyword>
<keyword id="KW-0812">Transmembrane</keyword>
<keyword id="KW-1133">Transmembrane helix</keyword>
<organism>
    <name type="scientific">Streptococcus mutans serotype c (strain ATCC 700610 / UA159)</name>
    <dbReference type="NCBI Taxonomy" id="210007"/>
    <lineage>
        <taxon>Bacteria</taxon>
        <taxon>Bacillati</taxon>
        <taxon>Bacillota</taxon>
        <taxon>Bacilli</taxon>
        <taxon>Lactobacillales</taxon>
        <taxon>Streptococcaceae</taxon>
        <taxon>Streptococcus</taxon>
    </lineage>
</organism>
<dbReference type="EMBL" id="AE014133">
    <property type="protein sequence ID" value="AAN59657.1"/>
    <property type="molecule type" value="Genomic_DNA"/>
</dbReference>
<dbReference type="RefSeq" id="NP_722351.1">
    <property type="nucleotide sequence ID" value="NC_004350.2"/>
</dbReference>
<dbReference type="RefSeq" id="WP_002262368.1">
    <property type="nucleotide sequence ID" value="NC_004350.2"/>
</dbReference>
<dbReference type="STRING" id="210007.SMU_2059c"/>
<dbReference type="KEGG" id="smu:SMU_2059c"/>
<dbReference type="PATRIC" id="fig|210007.7.peg.1833"/>
<dbReference type="eggNOG" id="COG2855">
    <property type="taxonomic scope" value="Bacteria"/>
</dbReference>
<dbReference type="HOGENOM" id="CLU_033541_2_1_9"/>
<dbReference type="OrthoDB" id="9811391at2"/>
<dbReference type="PhylomeDB" id="Q8DRZ4"/>
<dbReference type="Proteomes" id="UP000002512">
    <property type="component" value="Chromosome"/>
</dbReference>
<dbReference type="GO" id="GO:0005886">
    <property type="term" value="C:plasma membrane"/>
    <property type="evidence" value="ECO:0007669"/>
    <property type="project" value="UniProtKB-SubCell"/>
</dbReference>
<dbReference type="InterPro" id="IPR018383">
    <property type="entry name" value="UPF0324_pro"/>
</dbReference>
<dbReference type="PANTHER" id="PTHR30106">
    <property type="entry name" value="INNER MEMBRANE PROTEIN YEIH-RELATED"/>
    <property type="match status" value="1"/>
</dbReference>
<dbReference type="PANTHER" id="PTHR30106:SF1">
    <property type="entry name" value="UPF0324 MEMBRANE PROTEIN FN0533"/>
    <property type="match status" value="1"/>
</dbReference>
<dbReference type="Pfam" id="PF03601">
    <property type="entry name" value="Cons_hypoth698"/>
    <property type="match status" value="1"/>
</dbReference>